<comment type="function">
    <text evidence="2">Cell wall formation.</text>
</comment>
<comment type="catalytic activity">
    <reaction evidence="2">
        <text>2 D-alanine + ATP = D-alanyl-D-alanine + ADP + phosphate + H(+)</text>
        <dbReference type="Rhea" id="RHEA:11224"/>
        <dbReference type="ChEBI" id="CHEBI:15378"/>
        <dbReference type="ChEBI" id="CHEBI:30616"/>
        <dbReference type="ChEBI" id="CHEBI:43474"/>
        <dbReference type="ChEBI" id="CHEBI:57416"/>
        <dbReference type="ChEBI" id="CHEBI:57822"/>
        <dbReference type="ChEBI" id="CHEBI:456216"/>
        <dbReference type="EC" id="6.3.2.4"/>
    </reaction>
</comment>
<comment type="cofactor">
    <cofactor evidence="1">
        <name>Mg(2+)</name>
        <dbReference type="ChEBI" id="CHEBI:18420"/>
    </cofactor>
    <cofactor evidence="1">
        <name>Mn(2+)</name>
        <dbReference type="ChEBI" id="CHEBI:29035"/>
    </cofactor>
    <text evidence="1">Binds 2 magnesium or manganese ions per subunit.</text>
</comment>
<comment type="pathway">
    <text evidence="2">Cell wall biogenesis; peptidoglycan biosynthesis.</text>
</comment>
<comment type="subcellular location">
    <subcellularLocation>
        <location evidence="2">Cytoplasm</location>
    </subcellularLocation>
</comment>
<comment type="similarity">
    <text evidence="2">Belongs to the D-alanine--D-alanine ligase family.</text>
</comment>
<accession>B2GAV5</accession>
<gene>
    <name evidence="2" type="primary">ddl</name>
    <name type="ordered locus">LAF_0451</name>
</gene>
<dbReference type="EC" id="6.3.2.4" evidence="2"/>
<dbReference type="EMBL" id="AP008937">
    <property type="protein sequence ID" value="BAG26787.1"/>
    <property type="molecule type" value="Genomic_DNA"/>
</dbReference>
<dbReference type="RefSeq" id="WP_012390927.1">
    <property type="nucleotide sequence ID" value="NC_010610.1"/>
</dbReference>
<dbReference type="SMR" id="B2GAV5"/>
<dbReference type="KEGG" id="lfe:LAF_0451"/>
<dbReference type="PATRIC" id="fig|334390.5.peg.489"/>
<dbReference type="eggNOG" id="COG1181">
    <property type="taxonomic scope" value="Bacteria"/>
</dbReference>
<dbReference type="HOGENOM" id="CLU_039268_0_1_9"/>
<dbReference type="UniPathway" id="UPA00219"/>
<dbReference type="Proteomes" id="UP000001697">
    <property type="component" value="Chromosome"/>
</dbReference>
<dbReference type="GO" id="GO:0005829">
    <property type="term" value="C:cytosol"/>
    <property type="evidence" value="ECO:0007669"/>
    <property type="project" value="TreeGrafter"/>
</dbReference>
<dbReference type="GO" id="GO:0005524">
    <property type="term" value="F:ATP binding"/>
    <property type="evidence" value="ECO:0007669"/>
    <property type="project" value="UniProtKB-KW"/>
</dbReference>
<dbReference type="GO" id="GO:0008716">
    <property type="term" value="F:D-alanine-D-alanine ligase activity"/>
    <property type="evidence" value="ECO:0007669"/>
    <property type="project" value="UniProtKB-UniRule"/>
</dbReference>
<dbReference type="GO" id="GO:0046872">
    <property type="term" value="F:metal ion binding"/>
    <property type="evidence" value="ECO:0007669"/>
    <property type="project" value="UniProtKB-KW"/>
</dbReference>
<dbReference type="GO" id="GO:0071555">
    <property type="term" value="P:cell wall organization"/>
    <property type="evidence" value="ECO:0007669"/>
    <property type="project" value="UniProtKB-KW"/>
</dbReference>
<dbReference type="GO" id="GO:0009252">
    <property type="term" value="P:peptidoglycan biosynthetic process"/>
    <property type="evidence" value="ECO:0007669"/>
    <property type="project" value="UniProtKB-UniRule"/>
</dbReference>
<dbReference type="GO" id="GO:0008360">
    <property type="term" value="P:regulation of cell shape"/>
    <property type="evidence" value="ECO:0007669"/>
    <property type="project" value="UniProtKB-KW"/>
</dbReference>
<dbReference type="FunFam" id="3.30.470.20:FF:000008">
    <property type="entry name" value="D-alanine--D-alanine ligase"/>
    <property type="match status" value="1"/>
</dbReference>
<dbReference type="Gene3D" id="3.40.50.20">
    <property type="match status" value="1"/>
</dbReference>
<dbReference type="Gene3D" id="3.30.1490.20">
    <property type="entry name" value="ATP-grasp fold, A domain"/>
    <property type="match status" value="1"/>
</dbReference>
<dbReference type="Gene3D" id="3.30.470.20">
    <property type="entry name" value="ATP-grasp fold, B domain"/>
    <property type="match status" value="1"/>
</dbReference>
<dbReference type="HAMAP" id="MF_00047">
    <property type="entry name" value="Dala_Dala_lig"/>
    <property type="match status" value="1"/>
</dbReference>
<dbReference type="InterPro" id="IPR011761">
    <property type="entry name" value="ATP-grasp"/>
</dbReference>
<dbReference type="InterPro" id="IPR013815">
    <property type="entry name" value="ATP_grasp_subdomain_1"/>
</dbReference>
<dbReference type="InterPro" id="IPR000291">
    <property type="entry name" value="D-Ala_lig_Van_CS"/>
</dbReference>
<dbReference type="InterPro" id="IPR005905">
    <property type="entry name" value="D_ala_D_ala"/>
</dbReference>
<dbReference type="InterPro" id="IPR011095">
    <property type="entry name" value="Dala_Dala_lig_C"/>
</dbReference>
<dbReference type="InterPro" id="IPR011127">
    <property type="entry name" value="Dala_Dala_lig_N"/>
</dbReference>
<dbReference type="InterPro" id="IPR016185">
    <property type="entry name" value="PreATP-grasp_dom_sf"/>
</dbReference>
<dbReference type="NCBIfam" id="TIGR01205">
    <property type="entry name" value="D_ala_D_alaTIGR"/>
    <property type="match status" value="1"/>
</dbReference>
<dbReference type="NCBIfam" id="NF002528">
    <property type="entry name" value="PRK01966.1-4"/>
    <property type="match status" value="1"/>
</dbReference>
<dbReference type="PANTHER" id="PTHR23132">
    <property type="entry name" value="D-ALANINE--D-ALANINE LIGASE"/>
    <property type="match status" value="1"/>
</dbReference>
<dbReference type="PANTHER" id="PTHR23132:SF25">
    <property type="entry name" value="D-ALANINE--D-ALANINE LIGASE A"/>
    <property type="match status" value="1"/>
</dbReference>
<dbReference type="Pfam" id="PF07478">
    <property type="entry name" value="Dala_Dala_lig_C"/>
    <property type="match status" value="1"/>
</dbReference>
<dbReference type="Pfam" id="PF01820">
    <property type="entry name" value="Dala_Dala_lig_N"/>
    <property type="match status" value="1"/>
</dbReference>
<dbReference type="PIRSF" id="PIRSF039102">
    <property type="entry name" value="Ddl/VanB"/>
    <property type="match status" value="1"/>
</dbReference>
<dbReference type="SUPFAM" id="SSF56059">
    <property type="entry name" value="Glutathione synthetase ATP-binding domain-like"/>
    <property type="match status" value="1"/>
</dbReference>
<dbReference type="SUPFAM" id="SSF52440">
    <property type="entry name" value="PreATP-grasp domain"/>
    <property type="match status" value="1"/>
</dbReference>
<dbReference type="PROSITE" id="PS50975">
    <property type="entry name" value="ATP_GRASP"/>
    <property type="match status" value="1"/>
</dbReference>
<dbReference type="PROSITE" id="PS00843">
    <property type="entry name" value="DALA_DALA_LIGASE_1"/>
    <property type="match status" value="1"/>
</dbReference>
<dbReference type="PROSITE" id="PS00844">
    <property type="entry name" value="DALA_DALA_LIGASE_2"/>
    <property type="match status" value="1"/>
</dbReference>
<organism>
    <name type="scientific">Limosilactobacillus fermentum (strain NBRC 3956 / LMG 18251)</name>
    <name type="common">Lactobacillus fermentum</name>
    <dbReference type="NCBI Taxonomy" id="334390"/>
    <lineage>
        <taxon>Bacteria</taxon>
        <taxon>Bacillati</taxon>
        <taxon>Bacillota</taxon>
        <taxon>Bacilli</taxon>
        <taxon>Lactobacillales</taxon>
        <taxon>Lactobacillaceae</taxon>
        <taxon>Limosilactobacillus</taxon>
    </lineage>
</organism>
<evidence type="ECO:0000250" key="1"/>
<evidence type="ECO:0000255" key="2">
    <source>
        <dbReference type="HAMAP-Rule" id="MF_00047"/>
    </source>
</evidence>
<keyword id="KW-0067">ATP-binding</keyword>
<keyword id="KW-0133">Cell shape</keyword>
<keyword id="KW-0961">Cell wall biogenesis/degradation</keyword>
<keyword id="KW-0963">Cytoplasm</keyword>
<keyword id="KW-0436">Ligase</keyword>
<keyword id="KW-0460">Magnesium</keyword>
<keyword id="KW-0464">Manganese</keyword>
<keyword id="KW-0479">Metal-binding</keyword>
<keyword id="KW-0547">Nucleotide-binding</keyword>
<keyword id="KW-0573">Peptidoglycan synthesis</keyword>
<keyword id="KW-1185">Reference proteome</keyword>
<sequence length="377" mass="42345">MTEKKLHVALLFGGNSSEHDVSKRSAHNIYDGMDKDKYDVSIFMFTKDGILLDNEASQRIFDGEPEDQVVQEAYQKMDLDAPLAPIAALSTVKEIDFFYPVIHGNLGEDGTVQGLFRLLKKPYIGSGIASSAMSFDKDLTKRILNQAGIRNTKYLLVTPQNKDQYSWSRIKEELGDLVFVKPAKQGSSVGIHKVDTEEEYETAMKDAFTYDYKVLVEAGIKNPREIEISILGNENPIASKLGGIRVPEGDEFYDYENKFVDASGVVFDLPVIVDDDLAKEITDMALKAYEALGMKGMARIDFLVDEDGVPYLGEPNTLPGFTNISLYPQMWNISGISYSELIDRLIQLGIEEFEYEGQLRYDFKALGVEKVGEKRYN</sequence>
<reference key="1">
    <citation type="journal article" date="2008" name="DNA Res.">
        <title>Comparative genome analysis of Lactobacillus reuteri and Lactobacillus fermentum reveal a genomic island for reuterin and cobalamin production.</title>
        <authorList>
            <person name="Morita H."/>
            <person name="Toh H."/>
            <person name="Fukuda S."/>
            <person name="Horikawa H."/>
            <person name="Oshima K."/>
            <person name="Suzuki T."/>
            <person name="Murakami M."/>
            <person name="Hisamatsu S."/>
            <person name="Kato Y."/>
            <person name="Takizawa T."/>
            <person name="Fukuoka H."/>
            <person name="Yoshimura T."/>
            <person name="Itoh K."/>
            <person name="O'Sullivan D.J."/>
            <person name="McKay L.L."/>
            <person name="Ohno H."/>
            <person name="Kikuchi J."/>
            <person name="Masaoka T."/>
            <person name="Hattori M."/>
        </authorList>
    </citation>
    <scope>NUCLEOTIDE SEQUENCE [LARGE SCALE GENOMIC DNA]</scope>
    <source>
        <strain>NBRC 3956 / LMG 18251</strain>
    </source>
</reference>
<name>DDL_LIMF3</name>
<proteinExistence type="inferred from homology"/>
<feature type="chain" id="PRO_1000091190" description="D-alanine--D-alanine ligase">
    <location>
        <begin position="1"/>
        <end position="377"/>
    </location>
</feature>
<feature type="domain" description="ATP-grasp" evidence="2">
    <location>
        <begin position="141"/>
        <end position="347"/>
    </location>
</feature>
<feature type="binding site" evidence="2">
    <location>
        <begin position="171"/>
        <end position="226"/>
    </location>
    <ligand>
        <name>ATP</name>
        <dbReference type="ChEBI" id="CHEBI:30616"/>
    </ligand>
</feature>
<feature type="binding site" evidence="2">
    <location>
        <position position="301"/>
    </location>
    <ligand>
        <name>Mg(2+)</name>
        <dbReference type="ChEBI" id="CHEBI:18420"/>
        <label>1</label>
    </ligand>
</feature>
<feature type="binding site" evidence="2">
    <location>
        <position position="314"/>
    </location>
    <ligand>
        <name>Mg(2+)</name>
        <dbReference type="ChEBI" id="CHEBI:18420"/>
        <label>1</label>
    </ligand>
</feature>
<feature type="binding site" evidence="2">
    <location>
        <position position="314"/>
    </location>
    <ligand>
        <name>Mg(2+)</name>
        <dbReference type="ChEBI" id="CHEBI:18420"/>
        <label>2</label>
    </ligand>
</feature>
<feature type="binding site" evidence="2">
    <location>
        <position position="316"/>
    </location>
    <ligand>
        <name>Mg(2+)</name>
        <dbReference type="ChEBI" id="CHEBI:18420"/>
        <label>2</label>
    </ligand>
</feature>
<protein>
    <recommendedName>
        <fullName evidence="2">D-alanine--D-alanine ligase</fullName>
        <ecNumber evidence="2">6.3.2.4</ecNumber>
    </recommendedName>
    <alternativeName>
        <fullName evidence="2">D-Ala-D-Ala ligase</fullName>
    </alternativeName>
    <alternativeName>
        <fullName evidence="2">D-alanylalanine synthetase</fullName>
    </alternativeName>
</protein>